<evidence type="ECO:0000255" key="1">
    <source>
        <dbReference type="PROSITE-ProRule" id="PRU00108"/>
    </source>
</evidence>
<evidence type="ECO:0000255" key="2">
    <source>
        <dbReference type="PROSITE-ProRule" id="PRU00381"/>
    </source>
</evidence>
<evidence type="ECO:0000256" key="3">
    <source>
        <dbReference type="SAM" id="MobiDB-lite"/>
    </source>
</evidence>
<evidence type="ECO:0000269" key="4">
    <source>
    </source>
</evidence>
<evidence type="ECO:0000303" key="5">
    <source>
    </source>
</evidence>
<evidence type="ECO:0000305" key="6"/>
<protein>
    <recommendedName>
        <fullName>Paired box protein Pax-6</fullName>
    </recommendedName>
    <alternativeName>
        <fullName>Protein eyeless</fullName>
    </alternativeName>
</protein>
<proteinExistence type="evidence at protein level"/>
<name>PAX6_DROME</name>
<reference key="1">
    <citation type="journal article" date="1994" name="Science">
        <title>Homology of the eyeless gene of Drosophila to the Small eye gene in mice and Aniridia in humans.</title>
        <authorList>
            <person name="Quiring R."/>
            <person name="Walldorf U."/>
            <person name="Kloter U."/>
            <person name="Gehring W.J."/>
        </authorList>
    </citation>
    <scope>NUCLEOTIDE SEQUENCE [MRNA] (ISOFORM EMBRYONIC)</scope>
    <scope>NUCLEOTIDE SEQUENCE OF 1-56 (ISOFORM LARVAL)</scope>
    <scope>FUNCTION</scope>
    <scope>SUBCELLULAR LOCATION</scope>
    <scope>TISSUE SPECIFICITY</scope>
    <source>
        <strain>Oregon-R</strain>
        <tissue>Embryo</tissue>
        <tissue>Imaginal disk</tissue>
    </source>
</reference>
<reference key="2">
    <citation type="journal article" date="2000" name="Science">
        <title>The genome sequence of Drosophila melanogaster.</title>
        <authorList>
            <person name="Adams M.D."/>
            <person name="Celniker S.E."/>
            <person name="Holt R.A."/>
            <person name="Evans C.A."/>
            <person name="Gocayne J.D."/>
            <person name="Amanatides P.G."/>
            <person name="Scherer S.E."/>
            <person name="Li P.W."/>
            <person name="Hoskins R.A."/>
            <person name="Galle R.F."/>
            <person name="George R.A."/>
            <person name="Lewis S.E."/>
            <person name="Richards S."/>
            <person name="Ashburner M."/>
            <person name="Henderson S.N."/>
            <person name="Sutton G.G."/>
            <person name="Wortman J.R."/>
            <person name="Yandell M.D."/>
            <person name="Zhang Q."/>
            <person name="Chen L.X."/>
            <person name="Brandon R.C."/>
            <person name="Rogers Y.-H.C."/>
            <person name="Blazej R.G."/>
            <person name="Champe M."/>
            <person name="Pfeiffer B.D."/>
            <person name="Wan K.H."/>
            <person name="Doyle C."/>
            <person name="Baxter E.G."/>
            <person name="Helt G."/>
            <person name="Nelson C.R."/>
            <person name="Miklos G.L.G."/>
            <person name="Abril J.F."/>
            <person name="Agbayani A."/>
            <person name="An H.-J."/>
            <person name="Andrews-Pfannkoch C."/>
            <person name="Baldwin D."/>
            <person name="Ballew R.M."/>
            <person name="Basu A."/>
            <person name="Baxendale J."/>
            <person name="Bayraktaroglu L."/>
            <person name="Beasley E.M."/>
            <person name="Beeson K.Y."/>
            <person name="Benos P.V."/>
            <person name="Berman B.P."/>
            <person name="Bhandari D."/>
            <person name="Bolshakov S."/>
            <person name="Borkova D."/>
            <person name="Botchan M.R."/>
            <person name="Bouck J."/>
            <person name="Brokstein P."/>
            <person name="Brottier P."/>
            <person name="Burtis K.C."/>
            <person name="Busam D.A."/>
            <person name="Butler H."/>
            <person name="Cadieu E."/>
            <person name="Center A."/>
            <person name="Chandra I."/>
            <person name="Cherry J.M."/>
            <person name="Cawley S."/>
            <person name="Dahlke C."/>
            <person name="Davenport L.B."/>
            <person name="Davies P."/>
            <person name="de Pablos B."/>
            <person name="Delcher A."/>
            <person name="Deng Z."/>
            <person name="Mays A.D."/>
            <person name="Dew I."/>
            <person name="Dietz S.M."/>
            <person name="Dodson K."/>
            <person name="Doup L.E."/>
            <person name="Downes M."/>
            <person name="Dugan-Rocha S."/>
            <person name="Dunkov B.C."/>
            <person name="Dunn P."/>
            <person name="Durbin K.J."/>
            <person name="Evangelista C.C."/>
            <person name="Ferraz C."/>
            <person name="Ferriera S."/>
            <person name="Fleischmann W."/>
            <person name="Fosler C."/>
            <person name="Gabrielian A.E."/>
            <person name="Garg N.S."/>
            <person name="Gelbart W.M."/>
            <person name="Glasser K."/>
            <person name="Glodek A."/>
            <person name="Gong F."/>
            <person name="Gorrell J.H."/>
            <person name="Gu Z."/>
            <person name="Guan P."/>
            <person name="Harris M."/>
            <person name="Harris N.L."/>
            <person name="Harvey D.A."/>
            <person name="Heiman T.J."/>
            <person name="Hernandez J.R."/>
            <person name="Houck J."/>
            <person name="Hostin D."/>
            <person name="Houston K.A."/>
            <person name="Howland T.J."/>
            <person name="Wei M.-H."/>
            <person name="Ibegwam C."/>
            <person name="Jalali M."/>
            <person name="Kalush F."/>
            <person name="Karpen G.H."/>
            <person name="Ke Z."/>
            <person name="Kennison J.A."/>
            <person name="Ketchum K.A."/>
            <person name="Kimmel B.E."/>
            <person name="Kodira C.D."/>
            <person name="Kraft C.L."/>
            <person name="Kravitz S."/>
            <person name="Kulp D."/>
            <person name="Lai Z."/>
            <person name="Lasko P."/>
            <person name="Lei Y."/>
            <person name="Levitsky A.A."/>
            <person name="Li J.H."/>
            <person name="Li Z."/>
            <person name="Liang Y."/>
            <person name="Lin X."/>
            <person name="Liu X."/>
            <person name="Mattei B."/>
            <person name="McIntosh T.C."/>
            <person name="McLeod M.P."/>
            <person name="McPherson D."/>
            <person name="Merkulov G."/>
            <person name="Milshina N.V."/>
            <person name="Mobarry C."/>
            <person name="Morris J."/>
            <person name="Moshrefi A."/>
            <person name="Mount S.M."/>
            <person name="Moy M."/>
            <person name="Murphy B."/>
            <person name="Murphy L."/>
            <person name="Muzny D.M."/>
            <person name="Nelson D.L."/>
            <person name="Nelson D.R."/>
            <person name="Nelson K.A."/>
            <person name="Nixon K."/>
            <person name="Nusskern D.R."/>
            <person name="Pacleb J.M."/>
            <person name="Palazzolo M."/>
            <person name="Pittman G.S."/>
            <person name="Pan S."/>
            <person name="Pollard J."/>
            <person name="Puri V."/>
            <person name="Reese M.G."/>
            <person name="Reinert K."/>
            <person name="Remington K."/>
            <person name="Saunders R.D.C."/>
            <person name="Scheeler F."/>
            <person name="Shen H."/>
            <person name="Shue B.C."/>
            <person name="Siden-Kiamos I."/>
            <person name="Simpson M."/>
            <person name="Skupski M.P."/>
            <person name="Smith T.J."/>
            <person name="Spier E."/>
            <person name="Spradling A.C."/>
            <person name="Stapleton M."/>
            <person name="Strong R."/>
            <person name="Sun E."/>
            <person name="Svirskas R."/>
            <person name="Tector C."/>
            <person name="Turner R."/>
            <person name="Venter E."/>
            <person name="Wang A.H."/>
            <person name="Wang X."/>
            <person name="Wang Z.-Y."/>
            <person name="Wassarman D.A."/>
            <person name="Weinstock G.M."/>
            <person name="Weissenbach J."/>
            <person name="Williams S.M."/>
            <person name="Woodage T."/>
            <person name="Worley K.C."/>
            <person name="Wu D."/>
            <person name="Yang S."/>
            <person name="Yao Q.A."/>
            <person name="Ye J."/>
            <person name="Yeh R.-F."/>
            <person name="Zaveri J.S."/>
            <person name="Zhan M."/>
            <person name="Zhang G."/>
            <person name="Zhao Q."/>
            <person name="Zheng L."/>
            <person name="Zheng X.H."/>
            <person name="Zhong F.N."/>
            <person name="Zhong W."/>
            <person name="Zhou X."/>
            <person name="Zhu S.C."/>
            <person name="Zhu X."/>
            <person name="Smith H.O."/>
            <person name="Gibbs R.A."/>
            <person name="Myers E.W."/>
            <person name="Rubin G.M."/>
            <person name="Venter J.C."/>
        </authorList>
    </citation>
    <scope>NUCLEOTIDE SEQUENCE [LARGE SCALE GENOMIC DNA]</scope>
    <source>
        <strain>Berkeley</strain>
    </source>
</reference>
<reference key="3">
    <citation type="journal article" date="2002" name="Genome Biol.">
        <title>Annotation of the Drosophila melanogaster euchromatic genome: a systematic review.</title>
        <authorList>
            <person name="Misra S."/>
            <person name="Crosby M.A."/>
            <person name="Mungall C.J."/>
            <person name="Matthews B.B."/>
            <person name="Campbell K.S."/>
            <person name="Hradecky P."/>
            <person name="Huang Y."/>
            <person name="Kaminker J.S."/>
            <person name="Millburn G.H."/>
            <person name="Prochnik S.E."/>
            <person name="Smith C.D."/>
            <person name="Tupy J.L."/>
            <person name="Whitfield E.J."/>
            <person name="Bayraktaroglu L."/>
            <person name="Berman B.P."/>
            <person name="Bettencourt B.R."/>
            <person name="Celniker S.E."/>
            <person name="de Grey A.D.N.J."/>
            <person name="Drysdale R.A."/>
            <person name="Harris N.L."/>
            <person name="Richter J."/>
            <person name="Russo S."/>
            <person name="Schroeder A.J."/>
            <person name="Shu S.Q."/>
            <person name="Stapleton M."/>
            <person name="Yamada C."/>
            <person name="Ashburner M."/>
            <person name="Gelbart W.M."/>
            <person name="Rubin G.M."/>
            <person name="Lewis S.E."/>
        </authorList>
    </citation>
    <scope>GENOME REANNOTATION</scope>
    <scope>ALTERNATIVE SPLICING</scope>
    <source>
        <strain>Berkeley</strain>
    </source>
</reference>
<reference key="4">
    <citation type="journal article" date="2002" name="Science">
        <title>Nucleotide variation along the Drosophila melanogaster fourth chromosome.</title>
        <authorList>
            <person name="Wang W."/>
            <person name="Thornton K."/>
            <person name="Berry A."/>
            <person name="Long M."/>
        </authorList>
    </citation>
    <scope>NUCLEOTIDE SEQUENCE OF 623-751</scope>
    <source>
        <strain>253.27</strain>
        <strain>253.30</strain>
        <strain>closs10</strain>
        <strain>closs19</strain>
        <strain>north7.13</strain>
        <strain>Rio</strain>
        <strain>south1.10</strain>
        <strain>Y10</strain>
        <strain>ZH56</strain>
        <strain>ZW30</strain>
    </source>
</reference>
<keyword id="KW-0025">Alternative splicing</keyword>
<keyword id="KW-0217">Developmental protein</keyword>
<keyword id="KW-0238">DNA-binding</keyword>
<keyword id="KW-0371">Homeobox</keyword>
<keyword id="KW-0539">Nucleus</keyword>
<keyword id="KW-0563">Paired box</keyword>
<keyword id="KW-1185">Reference proteome</keyword>
<keyword id="KW-0804">Transcription</keyword>
<keyword id="KW-0805">Transcription regulation</keyword>
<comment type="function">
    <text evidence="4">Involved in eye morphogenesis.</text>
</comment>
<comment type="interaction">
    <interactant intactId="EBI-232318">
        <id>O18381</id>
    </interactant>
    <interactant intactId="EBI-15726199">
        <id>P02833-1</id>
        <label>Antp</label>
    </interactant>
    <organismsDiffer>false</organismsDiffer>
    <experiments>4</experiments>
</comment>
<comment type="subcellular location">
    <subcellularLocation>
        <location evidence="1 2 4">Nucleus</location>
    </subcellularLocation>
</comment>
<comment type="alternative products">
    <event type="alternative splicing"/>
    <isoform>
        <id>O18381-1</id>
        <name>Larval</name>
        <sequence type="displayed"/>
    </isoform>
    <isoform>
        <id>O18381-2</id>
        <name>Embryonic</name>
        <name>A</name>
        <sequence type="described" ref="VSP_002369"/>
    </isoform>
    <isoform>
        <id>O18381-3</id>
        <name>B</name>
        <sequence type="described" ref="VSP_002368"/>
    </isoform>
</comment>
<comment type="tissue specificity">
    <text evidence="4">Expression is confined to the eye imaginal disks, parts of the brain, the ventral ganglion and the salivary glands.</text>
</comment>
<comment type="similarity">
    <text evidence="6">Belongs to the paired homeobox family.</text>
</comment>
<sequence>MRNLPCLGTAGGSGLGGIAGKPSPTMEAVEASTASHRHSTSSYFATTYYHLTDDECHSGVNQLGGVFVGGRPLPDSTRQKIVELAHSGARPCDISRILQVSNGCVSKILGRYYETGSIRPRAIGGSKPRVATAEVVSKISQYKRECPSIFAWEIRDRLLQENVCTNDNIPSVSSINRVLRNLAAQKEQQSTGSGSSSTSAGNSISAKVSVSIGGNVSNVASGSRGTLSSSTDLMQTATPLNSSESGGASNSGEGSEQEAIYEKLRLLNTQHAAGPGPLEPARAAPLVGQSPNHLGTRSSHPQLVHGNHQALQQHQQQSWPPRHYSGSWYPTSLSEIPISSAPNIASVTAYASGPSLAHSLSPPNDIESLASIGHQRNCPVATEDIHLKKELDGHQSDETGSGEGENSNGGASNIGNTEDDQARLILKRKLQRNRTSFTNDQIDSLEKEFERTHYPDVFARERLAGKIGLPEARIQVWFSNRRAKWRREEKLRNQRRTPNSTGASATSSSTSATASLTDSPNSLSACSSLLSGSAGGPSVSTINGLSSPSTLSTNVNAPTLGAGIDSSESPTPIPHIRPSCTSDNDNGRQSEDCRRVCSPCPLGVGGHQNTHHIQSNGHAQGHALVPAISPRLNFNSGSFGAMYSNMHHTALSMSDSYGAVTPIPSFNHSAVGPLAPPSPIPQQGDLTPSSLYPCHMTLRPPPMAPAHHHIVPGDGGRPAGVGLGSGQSANLGASCSGSGYEVLSAYALPPPPMASSSAADSSFSAASSASANVTPHHTIAQESCPSPCSSASHFGVAHSSGFSSDPISPAVSSYAHMSYNYASSANTMTPSSASGTSAHVAPGKQQFFASCFYSPWV</sequence>
<organism>
    <name type="scientific">Drosophila melanogaster</name>
    <name type="common">Fruit fly</name>
    <dbReference type="NCBI Taxonomy" id="7227"/>
    <lineage>
        <taxon>Eukaryota</taxon>
        <taxon>Metazoa</taxon>
        <taxon>Ecdysozoa</taxon>
        <taxon>Arthropoda</taxon>
        <taxon>Hexapoda</taxon>
        <taxon>Insecta</taxon>
        <taxon>Pterygota</taxon>
        <taxon>Neoptera</taxon>
        <taxon>Endopterygota</taxon>
        <taxon>Diptera</taxon>
        <taxon>Brachycera</taxon>
        <taxon>Muscomorpha</taxon>
        <taxon>Ephydroidea</taxon>
        <taxon>Drosophilidae</taxon>
        <taxon>Drosophila</taxon>
        <taxon>Sophophora</taxon>
    </lineage>
</organism>
<feature type="chain" id="PRO_0000050193" description="Paired box protein Pax-6">
    <location>
        <begin position="1"/>
        <end position="857"/>
    </location>
</feature>
<feature type="DNA-binding region" description="Paired" evidence="2">
    <location>
        <begin position="56"/>
        <end position="182"/>
    </location>
</feature>
<feature type="DNA-binding region" description="Homeobox" evidence="1">
    <location>
        <begin position="430"/>
        <end position="489"/>
    </location>
</feature>
<feature type="region of interest" description="PAI subdomain" evidence="2">
    <location>
        <begin position="59"/>
        <end position="115"/>
    </location>
</feature>
<feature type="region of interest" description="RED subdomain" evidence="2">
    <location>
        <begin position="134"/>
        <end position="182"/>
    </location>
</feature>
<feature type="region of interest" description="Disordered" evidence="3">
    <location>
        <begin position="236"/>
        <end position="257"/>
    </location>
</feature>
<feature type="region of interest" description="Disordered" evidence="3">
    <location>
        <begin position="271"/>
        <end position="322"/>
    </location>
</feature>
<feature type="region of interest" description="Disordered" evidence="3">
    <location>
        <begin position="392"/>
        <end position="417"/>
    </location>
</feature>
<feature type="region of interest" description="Disordered" evidence="3">
    <location>
        <begin position="488"/>
        <end position="519"/>
    </location>
</feature>
<feature type="region of interest" description="Disordered" evidence="3">
    <location>
        <begin position="554"/>
        <end position="588"/>
    </location>
</feature>
<feature type="compositionally biased region" description="Low complexity" evidence="3">
    <location>
        <begin position="241"/>
        <end position="257"/>
    </location>
</feature>
<feature type="compositionally biased region" description="Polar residues" evidence="3">
    <location>
        <begin position="289"/>
        <end position="301"/>
    </location>
</feature>
<feature type="compositionally biased region" description="Low complexity" evidence="3">
    <location>
        <begin position="308"/>
        <end position="317"/>
    </location>
</feature>
<feature type="compositionally biased region" description="Low complexity" evidence="3">
    <location>
        <begin position="404"/>
        <end position="416"/>
    </location>
</feature>
<feature type="compositionally biased region" description="Low complexity" evidence="3">
    <location>
        <begin position="500"/>
        <end position="519"/>
    </location>
</feature>
<feature type="splice variant" id="VSP_002368" description="In isoform B." evidence="6">
    <location>
        <begin position="1"/>
        <end position="233"/>
    </location>
</feature>
<feature type="splice variant" id="VSP_002369" description="In isoform Embryonic." evidence="5">
    <original>MRNLPCLGTAGGSGLGGIAGKPSPTMEAVEASTASHRHSTSSYFATTYYHLTDDEC</original>
    <variation>MFTLQPTPTAIGTVVPPWSAGTLIERLPSLEDMAHKG</variation>
    <location>
        <begin position="1"/>
        <end position="56"/>
    </location>
</feature>
<feature type="sequence variant" description="In strain: 253.27 and closs19.">
    <original>A</original>
    <variation>T</variation>
    <location>
        <position position="641"/>
    </location>
</feature>
<feature type="sequence variant" description="In strain: 253.27 and closs19.">
    <original>T</original>
    <variation>S</variation>
    <location>
        <position position="697"/>
    </location>
</feature>
<feature type="sequence conflict" description="In Ref. 1; CAA56038." evidence="6" ref="1">
    <original>S</original>
    <variation>T</variation>
    <location>
        <position position="249"/>
    </location>
</feature>
<feature type="sequence conflict" description="In Ref. 1; CAA56038." evidence="6" ref="1">
    <original>E</original>
    <variation>K</variation>
    <location>
        <position position="367"/>
    </location>
</feature>
<gene>
    <name type="primary">ey</name>
    <name type="synonym">pax6</name>
    <name type="ORF">CG1464</name>
</gene>
<accession>O18381</accession>
<accession>Q8ST91</accession>
<accession>Q8ST92</accession>
<accession>Q9V4F5</accession>
<dbReference type="EMBL" id="X79492">
    <property type="protein sequence ID" value="CAA56037.1"/>
    <property type="molecule type" value="mRNA"/>
</dbReference>
<dbReference type="EMBL" id="X79493">
    <property type="protein sequence ID" value="CAA56038.1"/>
    <property type="molecule type" value="mRNA"/>
</dbReference>
<dbReference type="EMBL" id="AE014135">
    <property type="protein sequence ID" value="AAF59318.1"/>
    <property type="molecule type" value="Genomic_DNA"/>
</dbReference>
<dbReference type="EMBL" id="AE014135">
    <property type="protein sequence ID" value="AAN06513.1"/>
    <property type="molecule type" value="Genomic_DNA"/>
</dbReference>
<dbReference type="EMBL" id="AF433696">
    <property type="protein sequence ID" value="AAM17959.1"/>
    <property type="molecule type" value="Genomic_DNA"/>
</dbReference>
<dbReference type="EMBL" id="AF433697">
    <property type="protein sequence ID" value="AAM17960.1"/>
    <property type="molecule type" value="Genomic_DNA"/>
</dbReference>
<dbReference type="EMBL" id="AF433698">
    <property type="protein sequence ID" value="AAM17961.1"/>
    <property type="molecule type" value="Genomic_DNA"/>
</dbReference>
<dbReference type="EMBL" id="AF433699">
    <property type="protein sequence ID" value="AAM17962.1"/>
    <property type="molecule type" value="Genomic_DNA"/>
</dbReference>
<dbReference type="EMBL" id="AF433700">
    <property type="protein sequence ID" value="AAM17963.1"/>
    <property type="molecule type" value="Genomic_DNA"/>
</dbReference>
<dbReference type="EMBL" id="AF433701">
    <property type="protein sequence ID" value="AAM17964.1"/>
    <property type="molecule type" value="Genomic_DNA"/>
</dbReference>
<dbReference type="EMBL" id="AF433702">
    <property type="protein sequence ID" value="AAM17965.1"/>
    <property type="molecule type" value="Genomic_DNA"/>
</dbReference>
<dbReference type="EMBL" id="AF433703">
    <property type="protein sequence ID" value="AAM17966.1"/>
    <property type="molecule type" value="Genomic_DNA"/>
</dbReference>
<dbReference type="EMBL" id="AF433704">
    <property type="protein sequence ID" value="AAM17967.1"/>
    <property type="molecule type" value="Genomic_DNA"/>
</dbReference>
<dbReference type="EMBL" id="AF433705">
    <property type="protein sequence ID" value="AAM17968.1"/>
    <property type="molecule type" value="Genomic_DNA"/>
</dbReference>
<dbReference type="PIR" id="I45557">
    <property type="entry name" value="I45557"/>
</dbReference>
<dbReference type="RefSeq" id="NP_524628.2">
    <molecule id="O18381-2"/>
    <property type="nucleotide sequence ID" value="NM_079889.3"/>
</dbReference>
<dbReference type="RefSeq" id="NP_726607.1">
    <molecule id="O18381-3"/>
    <property type="nucleotide sequence ID" value="NM_166789.2"/>
</dbReference>
<dbReference type="SMR" id="O18381"/>
<dbReference type="BioGRID" id="68643">
    <property type="interactions" value="81"/>
</dbReference>
<dbReference type="DIP" id="DIP-46285N"/>
<dbReference type="FunCoup" id="O18381">
    <property type="interactions" value="83"/>
</dbReference>
<dbReference type="IntAct" id="O18381">
    <property type="interactions" value="28"/>
</dbReference>
<dbReference type="STRING" id="7227.FBpp0099810"/>
<dbReference type="GlyGen" id="O18381">
    <property type="glycosylation" value="1 site"/>
</dbReference>
<dbReference type="PaxDb" id="7227-FBpp0099810"/>
<dbReference type="DNASU" id="43812"/>
<dbReference type="EnsemblMetazoa" id="FBtr0089235">
    <molecule id="O18381-3"/>
    <property type="protein sequence ID" value="FBpp0088299"/>
    <property type="gene ID" value="FBgn0005558"/>
</dbReference>
<dbReference type="EnsemblMetazoa" id="FBtr0089236">
    <molecule id="O18381-2"/>
    <property type="protein sequence ID" value="FBpp0088300"/>
    <property type="gene ID" value="FBgn0005558"/>
</dbReference>
<dbReference type="GeneID" id="43812"/>
<dbReference type="KEGG" id="dme:Dmel_CG1464"/>
<dbReference type="UCSC" id="CG1464-RA">
    <molecule id="O18381-1"/>
    <property type="organism name" value="d. melanogaster"/>
</dbReference>
<dbReference type="AGR" id="FB:FBgn0005558"/>
<dbReference type="CTD" id="43812"/>
<dbReference type="FlyBase" id="FBgn0005558">
    <property type="gene designation" value="ey"/>
</dbReference>
<dbReference type="VEuPathDB" id="VectorBase:FBgn0005558"/>
<dbReference type="eggNOG" id="KOG0849">
    <property type="taxonomic scope" value="Eukaryota"/>
</dbReference>
<dbReference type="HOGENOM" id="CLU_019281_7_0_1"/>
<dbReference type="InParanoid" id="O18381"/>
<dbReference type="OMA" id="ASIDHQR"/>
<dbReference type="OrthoDB" id="3225452at2759"/>
<dbReference type="PhylomeDB" id="O18381"/>
<dbReference type="SignaLink" id="O18381"/>
<dbReference type="BioGRID-ORCS" id="43812">
    <property type="hits" value="0 hits in 3 CRISPR screens"/>
</dbReference>
<dbReference type="GenomeRNAi" id="43812"/>
<dbReference type="PRO" id="PR:O18381"/>
<dbReference type="Proteomes" id="UP000000803">
    <property type="component" value="Chromosome 4"/>
</dbReference>
<dbReference type="Bgee" id="FBgn0005558">
    <property type="expression patterns" value="Expressed in alpha'/beta' Kenyon cell (Drosophila) in insect head and 44 other cell types or tissues"/>
</dbReference>
<dbReference type="ExpressionAtlas" id="O18381">
    <property type="expression patterns" value="baseline and differential"/>
</dbReference>
<dbReference type="GO" id="GO:0005634">
    <property type="term" value="C:nucleus"/>
    <property type="evidence" value="ECO:0000304"/>
    <property type="project" value="FlyBase"/>
</dbReference>
<dbReference type="GO" id="GO:0000981">
    <property type="term" value="F:DNA-binding transcription factor activity, RNA polymerase II-specific"/>
    <property type="evidence" value="ECO:0000314"/>
    <property type="project" value="FlyBase"/>
</dbReference>
<dbReference type="GO" id="GO:0000978">
    <property type="term" value="F:RNA polymerase II cis-regulatory region sequence-specific DNA binding"/>
    <property type="evidence" value="ECO:0000314"/>
    <property type="project" value="FlyBase"/>
</dbReference>
<dbReference type="GO" id="GO:0000977">
    <property type="term" value="F:RNA polymerase II transcription regulatory region sequence-specific DNA binding"/>
    <property type="evidence" value="ECO:0000314"/>
    <property type="project" value="FlyBase"/>
</dbReference>
<dbReference type="GO" id="GO:0043565">
    <property type="term" value="F:sequence-specific DNA binding"/>
    <property type="evidence" value="ECO:0000315"/>
    <property type="project" value="FlyBase"/>
</dbReference>
<dbReference type="GO" id="GO:0007628">
    <property type="term" value="P:adult walking behavior"/>
    <property type="evidence" value="ECO:0000315"/>
    <property type="project" value="FlyBase"/>
</dbReference>
<dbReference type="GO" id="GO:0007420">
    <property type="term" value="P:brain development"/>
    <property type="evidence" value="ECO:0000315"/>
    <property type="project" value="FlyBase"/>
</dbReference>
<dbReference type="GO" id="GO:0048854">
    <property type="term" value="P:brain morphogenesis"/>
    <property type="evidence" value="ECO:0000315"/>
    <property type="project" value="FlyBase"/>
</dbReference>
<dbReference type="GO" id="GO:0048036">
    <property type="term" value="P:central complex development"/>
    <property type="evidence" value="ECO:0000315"/>
    <property type="project" value="FlyBase"/>
</dbReference>
<dbReference type="GO" id="GO:0048749">
    <property type="term" value="P:compound eye development"/>
    <property type="evidence" value="ECO:0000315"/>
    <property type="project" value="FlyBase"/>
</dbReference>
<dbReference type="GO" id="GO:0001745">
    <property type="term" value="P:compound eye morphogenesis"/>
    <property type="evidence" value="ECO:0000315"/>
    <property type="project" value="FlyBase"/>
</dbReference>
<dbReference type="GO" id="GO:0007455">
    <property type="term" value="P:eye-antennal disc morphogenesis"/>
    <property type="evidence" value="ECO:0000304"/>
    <property type="project" value="FlyBase"/>
</dbReference>
<dbReference type="GO" id="GO:0008347">
    <property type="term" value="P:glial cell migration"/>
    <property type="evidence" value="ECO:0000315"/>
    <property type="project" value="FlyBase"/>
</dbReference>
<dbReference type="GO" id="GO:0042593">
    <property type="term" value="P:glucose homeostasis"/>
    <property type="evidence" value="ECO:0000315"/>
    <property type="project" value="FlyBase"/>
</dbReference>
<dbReference type="GO" id="GO:0016319">
    <property type="term" value="P:mushroom body development"/>
    <property type="evidence" value="ECO:0000315"/>
    <property type="project" value="FlyBase"/>
</dbReference>
<dbReference type="GO" id="GO:0030182">
    <property type="term" value="P:neuron differentiation"/>
    <property type="evidence" value="ECO:0000315"/>
    <property type="project" value="FlyBase"/>
</dbReference>
<dbReference type="GO" id="GO:0043704">
    <property type="term" value="P:photoreceptor cell fate specification"/>
    <property type="evidence" value="ECO:0000315"/>
    <property type="project" value="FlyBase"/>
</dbReference>
<dbReference type="GO" id="GO:0030307">
    <property type="term" value="P:positive regulation of cell growth"/>
    <property type="evidence" value="ECO:0000315"/>
    <property type="project" value="FlyBase"/>
</dbReference>
<dbReference type="GO" id="GO:0008284">
    <property type="term" value="P:positive regulation of cell population proliferation"/>
    <property type="evidence" value="ECO:0000315"/>
    <property type="project" value="FlyBase"/>
</dbReference>
<dbReference type="GO" id="GO:0045893">
    <property type="term" value="P:positive regulation of DNA-templated transcription"/>
    <property type="evidence" value="ECO:0000314"/>
    <property type="project" value="FlyBase"/>
</dbReference>
<dbReference type="GO" id="GO:0040018">
    <property type="term" value="P:positive regulation of multicellular organism growth"/>
    <property type="evidence" value="ECO:0000315"/>
    <property type="project" value="FlyBase"/>
</dbReference>
<dbReference type="GO" id="GO:0045944">
    <property type="term" value="P:positive regulation of transcription by RNA polymerase II"/>
    <property type="evidence" value="ECO:0000314"/>
    <property type="project" value="FlyBase"/>
</dbReference>
<dbReference type="GO" id="GO:0043567">
    <property type="term" value="P:regulation of insulin-like growth factor receptor signaling pathway"/>
    <property type="evidence" value="ECO:0000315"/>
    <property type="project" value="FlyBase"/>
</dbReference>
<dbReference type="GO" id="GO:0006357">
    <property type="term" value="P:regulation of transcription by RNA polymerase II"/>
    <property type="evidence" value="ECO:0000315"/>
    <property type="project" value="FlyBase"/>
</dbReference>
<dbReference type="GO" id="GO:0007423">
    <property type="term" value="P:sensory organ development"/>
    <property type="evidence" value="ECO:0000318"/>
    <property type="project" value="GO_Central"/>
</dbReference>
<dbReference type="CDD" id="cd00086">
    <property type="entry name" value="homeodomain"/>
    <property type="match status" value="1"/>
</dbReference>
<dbReference type="CDD" id="cd00131">
    <property type="entry name" value="PAX"/>
    <property type="match status" value="1"/>
</dbReference>
<dbReference type="FunFam" id="1.10.10.10:FF:000003">
    <property type="entry name" value="Paired box protein Pax-6"/>
    <property type="match status" value="1"/>
</dbReference>
<dbReference type="FunFam" id="1.10.10.10:FF:000069">
    <property type="entry name" value="Paired box protein Pax-6"/>
    <property type="match status" value="1"/>
</dbReference>
<dbReference type="FunFam" id="1.10.10.60:FF:000516">
    <property type="entry name" value="Transcription factor Toy"/>
    <property type="match status" value="1"/>
</dbReference>
<dbReference type="Gene3D" id="1.10.10.60">
    <property type="entry name" value="Homeodomain-like"/>
    <property type="match status" value="1"/>
</dbReference>
<dbReference type="Gene3D" id="1.10.10.10">
    <property type="entry name" value="Winged helix-like DNA-binding domain superfamily/Winged helix DNA-binding domain"/>
    <property type="match status" value="2"/>
</dbReference>
<dbReference type="InterPro" id="IPR001356">
    <property type="entry name" value="HD"/>
</dbReference>
<dbReference type="InterPro" id="IPR017970">
    <property type="entry name" value="Homeobox_CS"/>
</dbReference>
<dbReference type="InterPro" id="IPR009057">
    <property type="entry name" value="Homeodomain-like_sf"/>
</dbReference>
<dbReference type="InterPro" id="IPR043182">
    <property type="entry name" value="PAIRED_DNA-bd_dom"/>
</dbReference>
<dbReference type="InterPro" id="IPR001523">
    <property type="entry name" value="Paired_dom"/>
</dbReference>
<dbReference type="InterPro" id="IPR043565">
    <property type="entry name" value="PAX_fam"/>
</dbReference>
<dbReference type="InterPro" id="IPR036388">
    <property type="entry name" value="WH-like_DNA-bd_sf"/>
</dbReference>
<dbReference type="PANTHER" id="PTHR45636:SF41">
    <property type="entry name" value="PAIRED BOX PROTEIN PAX-6-RELATED"/>
    <property type="match status" value="1"/>
</dbReference>
<dbReference type="PANTHER" id="PTHR45636">
    <property type="entry name" value="PAIRED BOX PROTEIN PAX-6-RELATED-RELATED"/>
    <property type="match status" value="1"/>
</dbReference>
<dbReference type="Pfam" id="PF00046">
    <property type="entry name" value="Homeodomain"/>
    <property type="match status" value="1"/>
</dbReference>
<dbReference type="Pfam" id="PF00292">
    <property type="entry name" value="PAX"/>
    <property type="match status" value="1"/>
</dbReference>
<dbReference type="PRINTS" id="PR00027">
    <property type="entry name" value="PAIREDBOX"/>
</dbReference>
<dbReference type="SMART" id="SM00389">
    <property type="entry name" value="HOX"/>
    <property type="match status" value="1"/>
</dbReference>
<dbReference type="SMART" id="SM00351">
    <property type="entry name" value="PAX"/>
    <property type="match status" value="1"/>
</dbReference>
<dbReference type="SUPFAM" id="SSF46689">
    <property type="entry name" value="Homeodomain-like"/>
    <property type="match status" value="2"/>
</dbReference>
<dbReference type="PROSITE" id="PS00027">
    <property type="entry name" value="HOMEOBOX_1"/>
    <property type="match status" value="1"/>
</dbReference>
<dbReference type="PROSITE" id="PS50071">
    <property type="entry name" value="HOMEOBOX_2"/>
    <property type="match status" value="1"/>
</dbReference>
<dbReference type="PROSITE" id="PS00034">
    <property type="entry name" value="PAIRED_1"/>
    <property type="match status" value="1"/>
</dbReference>
<dbReference type="PROSITE" id="PS51057">
    <property type="entry name" value="PAIRED_2"/>
    <property type="match status" value="1"/>
</dbReference>